<accession>Q1CRU7</accession>
<dbReference type="EMBL" id="CP000241">
    <property type="protein sequence ID" value="ABF85325.1"/>
    <property type="molecule type" value="Genomic_DNA"/>
</dbReference>
<dbReference type="RefSeq" id="WP_000529972.1">
    <property type="nucleotide sequence ID" value="NC_008086.1"/>
</dbReference>
<dbReference type="SMR" id="Q1CRU7"/>
<dbReference type="KEGG" id="hpa:HPAG1_1258"/>
<dbReference type="HOGENOM" id="CLU_058591_0_2_7"/>
<dbReference type="GO" id="GO:0022627">
    <property type="term" value="C:cytosolic small ribosomal subunit"/>
    <property type="evidence" value="ECO:0007669"/>
    <property type="project" value="TreeGrafter"/>
</dbReference>
<dbReference type="GO" id="GO:0003729">
    <property type="term" value="F:mRNA binding"/>
    <property type="evidence" value="ECO:0007669"/>
    <property type="project" value="UniProtKB-UniRule"/>
</dbReference>
<dbReference type="GO" id="GO:0019843">
    <property type="term" value="F:rRNA binding"/>
    <property type="evidence" value="ECO:0007669"/>
    <property type="project" value="UniProtKB-UniRule"/>
</dbReference>
<dbReference type="GO" id="GO:0003735">
    <property type="term" value="F:structural constituent of ribosome"/>
    <property type="evidence" value="ECO:0007669"/>
    <property type="project" value="InterPro"/>
</dbReference>
<dbReference type="GO" id="GO:0006412">
    <property type="term" value="P:translation"/>
    <property type="evidence" value="ECO:0007669"/>
    <property type="project" value="UniProtKB-UniRule"/>
</dbReference>
<dbReference type="CDD" id="cd02412">
    <property type="entry name" value="KH-II_30S_S3"/>
    <property type="match status" value="1"/>
</dbReference>
<dbReference type="FunFam" id="3.30.1140.32:FF:000006">
    <property type="entry name" value="30S ribosomal protein S3"/>
    <property type="match status" value="1"/>
</dbReference>
<dbReference type="FunFam" id="3.30.300.20:FF:000001">
    <property type="entry name" value="30S ribosomal protein S3"/>
    <property type="match status" value="1"/>
</dbReference>
<dbReference type="Gene3D" id="3.30.300.20">
    <property type="match status" value="1"/>
</dbReference>
<dbReference type="Gene3D" id="3.30.1140.32">
    <property type="entry name" value="Ribosomal protein S3, C-terminal domain"/>
    <property type="match status" value="1"/>
</dbReference>
<dbReference type="HAMAP" id="MF_01309_B">
    <property type="entry name" value="Ribosomal_uS3_B"/>
    <property type="match status" value="1"/>
</dbReference>
<dbReference type="InterPro" id="IPR004087">
    <property type="entry name" value="KH_dom"/>
</dbReference>
<dbReference type="InterPro" id="IPR015946">
    <property type="entry name" value="KH_dom-like_a/b"/>
</dbReference>
<dbReference type="InterPro" id="IPR004044">
    <property type="entry name" value="KH_dom_type_2"/>
</dbReference>
<dbReference type="InterPro" id="IPR009019">
    <property type="entry name" value="KH_sf_prok-type"/>
</dbReference>
<dbReference type="InterPro" id="IPR036419">
    <property type="entry name" value="Ribosomal_S3_C_sf"/>
</dbReference>
<dbReference type="InterPro" id="IPR005704">
    <property type="entry name" value="Ribosomal_uS3_bac-typ"/>
</dbReference>
<dbReference type="InterPro" id="IPR001351">
    <property type="entry name" value="Ribosomal_uS3_C"/>
</dbReference>
<dbReference type="InterPro" id="IPR018280">
    <property type="entry name" value="Ribosomal_uS3_CS"/>
</dbReference>
<dbReference type="NCBIfam" id="TIGR01009">
    <property type="entry name" value="rpsC_bact"/>
    <property type="match status" value="1"/>
</dbReference>
<dbReference type="PANTHER" id="PTHR11760">
    <property type="entry name" value="30S/40S RIBOSOMAL PROTEIN S3"/>
    <property type="match status" value="1"/>
</dbReference>
<dbReference type="PANTHER" id="PTHR11760:SF19">
    <property type="entry name" value="SMALL RIBOSOMAL SUBUNIT PROTEIN US3C"/>
    <property type="match status" value="1"/>
</dbReference>
<dbReference type="Pfam" id="PF07650">
    <property type="entry name" value="KH_2"/>
    <property type="match status" value="1"/>
</dbReference>
<dbReference type="Pfam" id="PF00189">
    <property type="entry name" value="Ribosomal_S3_C"/>
    <property type="match status" value="1"/>
</dbReference>
<dbReference type="SMART" id="SM00322">
    <property type="entry name" value="KH"/>
    <property type="match status" value="1"/>
</dbReference>
<dbReference type="SUPFAM" id="SSF54814">
    <property type="entry name" value="Prokaryotic type KH domain (KH-domain type II)"/>
    <property type="match status" value="1"/>
</dbReference>
<dbReference type="SUPFAM" id="SSF54821">
    <property type="entry name" value="Ribosomal protein S3 C-terminal domain"/>
    <property type="match status" value="1"/>
</dbReference>
<dbReference type="PROSITE" id="PS50823">
    <property type="entry name" value="KH_TYPE_2"/>
    <property type="match status" value="1"/>
</dbReference>
<dbReference type="PROSITE" id="PS00548">
    <property type="entry name" value="RIBOSOMAL_S3"/>
    <property type="match status" value="1"/>
</dbReference>
<reference key="1">
    <citation type="journal article" date="2006" name="Proc. Natl. Acad. Sci. U.S.A.">
        <title>The complete genome sequence of a chronic atrophic gastritis Helicobacter pylori strain: evolution during disease progression.</title>
        <authorList>
            <person name="Oh J.D."/>
            <person name="Kling-Baeckhed H."/>
            <person name="Giannakis M."/>
            <person name="Xu J."/>
            <person name="Fulton R.S."/>
            <person name="Fulton L.A."/>
            <person name="Cordum H.S."/>
            <person name="Wang C."/>
            <person name="Elliott G."/>
            <person name="Edwards J."/>
            <person name="Mardis E.R."/>
            <person name="Engstrand L.G."/>
            <person name="Gordon J.I."/>
        </authorList>
    </citation>
    <scope>NUCLEOTIDE SEQUENCE [LARGE SCALE GENOMIC DNA]</scope>
    <source>
        <strain>HPAG1</strain>
    </source>
</reference>
<comment type="function">
    <text evidence="1">Binds the lower part of the 30S subunit head. Binds mRNA in the 70S ribosome, positioning it for translation.</text>
</comment>
<comment type="subunit">
    <text evidence="1">Part of the 30S ribosomal subunit. Forms a tight complex with proteins S10 and S14.</text>
</comment>
<comment type="similarity">
    <text evidence="1">Belongs to the universal ribosomal protein uS3 family.</text>
</comment>
<organism>
    <name type="scientific">Helicobacter pylori (strain HPAG1)</name>
    <dbReference type="NCBI Taxonomy" id="357544"/>
    <lineage>
        <taxon>Bacteria</taxon>
        <taxon>Pseudomonadati</taxon>
        <taxon>Campylobacterota</taxon>
        <taxon>Epsilonproteobacteria</taxon>
        <taxon>Campylobacterales</taxon>
        <taxon>Helicobacteraceae</taxon>
        <taxon>Helicobacter</taxon>
    </lineage>
</organism>
<proteinExistence type="inferred from homology"/>
<gene>
    <name evidence="1" type="primary">rpsC</name>
    <name type="ordered locus">HPAG1_1258</name>
</gene>
<evidence type="ECO:0000255" key="1">
    <source>
        <dbReference type="HAMAP-Rule" id="MF_01309"/>
    </source>
</evidence>
<evidence type="ECO:0000305" key="2"/>
<sequence length="234" mass="26466">MGQKVNPVGLRLGINRNWTSRWFPSARTAPSNIDEDNKIRKFLKKELYYAGVSEIVIERAAKKLRVTVVAARPGLIIGKKGVDIEKVKEGLKTLIKKEVSINIKEVKRPQADAQLAAENVATQLEKRVAFRRAMKKVMQAALKSGAKGIKVRVSGRLAGAEIARTEWYMEGRVPLHTLRAKIDYGFAEAMTVYGIIGVKVWIFKGEVLQKGIQFEKKEEAKEEREPRRSRRGRQ</sequence>
<feature type="chain" id="PRO_0000293803" description="Small ribosomal subunit protein uS3">
    <location>
        <begin position="1"/>
        <end position="234"/>
    </location>
</feature>
<feature type="domain" description="KH type-2" evidence="1">
    <location>
        <begin position="39"/>
        <end position="107"/>
    </location>
</feature>
<keyword id="KW-0687">Ribonucleoprotein</keyword>
<keyword id="KW-0689">Ribosomal protein</keyword>
<keyword id="KW-0694">RNA-binding</keyword>
<keyword id="KW-0699">rRNA-binding</keyword>
<name>RS3_HELPH</name>
<protein>
    <recommendedName>
        <fullName evidence="1">Small ribosomal subunit protein uS3</fullName>
    </recommendedName>
    <alternativeName>
        <fullName evidence="2">30S ribosomal protein S3</fullName>
    </alternativeName>
</protein>